<comment type="catalytic activity">
    <reaction evidence="1">
        <text>2 reduced [2Fe-2S]-[ferredoxin] + NADP(+) + H(+) = 2 oxidized [2Fe-2S]-[ferredoxin] + NADPH</text>
        <dbReference type="Rhea" id="RHEA:20125"/>
        <dbReference type="Rhea" id="RHEA-COMP:10000"/>
        <dbReference type="Rhea" id="RHEA-COMP:10001"/>
        <dbReference type="ChEBI" id="CHEBI:15378"/>
        <dbReference type="ChEBI" id="CHEBI:33737"/>
        <dbReference type="ChEBI" id="CHEBI:33738"/>
        <dbReference type="ChEBI" id="CHEBI:57783"/>
        <dbReference type="ChEBI" id="CHEBI:58349"/>
        <dbReference type="EC" id="1.18.1.2"/>
    </reaction>
</comment>
<comment type="cofactor">
    <cofactor evidence="1">
        <name>FAD</name>
        <dbReference type="ChEBI" id="CHEBI:57692"/>
    </cofactor>
    <text evidence="1">Binds 1 FAD per subunit.</text>
</comment>
<comment type="subunit">
    <text evidence="1">Homodimer.</text>
</comment>
<comment type="similarity">
    <text evidence="1">Belongs to the ferredoxin--NADP reductase type 2 family.</text>
</comment>
<proteinExistence type="inferred from homology"/>
<organism>
    <name type="scientific">Listeria monocytogenes serovar 1/2a (strain ATCC BAA-679 / EGD-e)</name>
    <dbReference type="NCBI Taxonomy" id="169963"/>
    <lineage>
        <taxon>Bacteria</taxon>
        <taxon>Bacillati</taxon>
        <taxon>Bacillota</taxon>
        <taxon>Bacilli</taxon>
        <taxon>Bacillales</taxon>
        <taxon>Listeriaceae</taxon>
        <taxon>Listeria</taxon>
    </lineage>
</organism>
<gene>
    <name type="ordered locus">lmo2390</name>
</gene>
<dbReference type="EC" id="1.18.1.2" evidence="1"/>
<dbReference type="EMBL" id="AL591983">
    <property type="protein sequence ID" value="CAD00468.1"/>
    <property type="molecule type" value="Genomic_DNA"/>
</dbReference>
<dbReference type="PIR" id="AF1373">
    <property type="entry name" value="AF1373"/>
</dbReference>
<dbReference type="RefSeq" id="NP_465913.1">
    <property type="nucleotide sequence ID" value="NC_003210.1"/>
</dbReference>
<dbReference type="RefSeq" id="WP_003722416.1">
    <property type="nucleotide sequence ID" value="NZ_CP149495.1"/>
</dbReference>
<dbReference type="SMR" id="Q8Y4P5"/>
<dbReference type="STRING" id="169963.gene:17595100"/>
<dbReference type="PaxDb" id="169963-lmo2390"/>
<dbReference type="EnsemblBacteria" id="CAD00468">
    <property type="protein sequence ID" value="CAD00468"/>
    <property type="gene ID" value="CAD00468"/>
</dbReference>
<dbReference type="GeneID" id="987545"/>
<dbReference type="KEGG" id="lmo:lmo2390"/>
<dbReference type="PATRIC" id="fig|169963.11.peg.2448"/>
<dbReference type="eggNOG" id="COG0492">
    <property type="taxonomic scope" value="Bacteria"/>
</dbReference>
<dbReference type="HOGENOM" id="CLU_031864_5_5_9"/>
<dbReference type="OrthoDB" id="9806179at2"/>
<dbReference type="PhylomeDB" id="Q8Y4P5"/>
<dbReference type="BioCyc" id="LMON169963:LMO2390-MONOMER"/>
<dbReference type="Proteomes" id="UP000000817">
    <property type="component" value="Chromosome"/>
</dbReference>
<dbReference type="GO" id="GO:0004324">
    <property type="term" value="F:ferredoxin-NADP+ reductase activity"/>
    <property type="evidence" value="ECO:0007669"/>
    <property type="project" value="UniProtKB-UniRule"/>
</dbReference>
<dbReference type="GO" id="GO:0050660">
    <property type="term" value="F:flavin adenine dinucleotide binding"/>
    <property type="evidence" value="ECO:0007669"/>
    <property type="project" value="UniProtKB-UniRule"/>
</dbReference>
<dbReference type="GO" id="GO:0050661">
    <property type="term" value="F:NADP binding"/>
    <property type="evidence" value="ECO:0007669"/>
    <property type="project" value="UniProtKB-UniRule"/>
</dbReference>
<dbReference type="GO" id="GO:0004791">
    <property type="term" value="F:thioredoxin-disulfide reductase (NADPH) activity"/>
    <property type="evidence" value="ECO:0000318"/>
    <property type="project" value="GO_Central"/>
</dbReference>
<dbReference type="GO" id="GO:0045454">
    <property type="term" value="P:cell redox homeostasis"/>
    <property type="evidence" value="ECO:0000318"/>
    <property type="project" value="GO_Central"/>
</dbReference>
<dbReference type="Gene3D" id="3.50.50.60">
    <property type="entry name" value="FAD/NAD(P)-binding domain"/>
    <property type="match status" value="2"/>
</dbReference>
<dbReference type="HAMAP" id="MF_01685">
    <property type="entry name" value="FENR2"/>
    <property type="match status" value="1"/>
</dbReference>
<dbReference type="InterPro" id="IPR036188">
    <property type="entry name" value="FAD/NAD-bd_sf"/>
</dbReference>
<dbReference type="InterPro" id="IPR023753">
    <property type="entry name" value="FAD/NAD-binding_dom"/>
</dbReference>
<dbReference type="InterPro" id="IPR022890">
    <property type="entry name" value="Fd--NADP_Rdtase_type_2"/>
</dbReference>
<dbReference type="InterPro" id="IPR050097">
    <property type="entry name" value="Ferredoxin-NADP_redctase_2"/>
</dbReference>
<dbReference type="PANTHER" id="PTHR48105">
    <property type="entry name" value="THIOREDOXIN REDUCTASE 1-RELATED-RELATED"/>
    <property type="match status" value="1"/>
</dbReference>
<dbReference type="Pfam" id="PF07992">
    <property type="entry name" value="Pyr_redox_2"/>
    <property type="match status" value="1"/>
</dbReference>
<dbReference type="PRINTS" id="PR00368">
    <property type="entry name" value="FADPNR"/>
</dbReference>
<dbReference type="PRINTS" id="PR00469">
    <property type="entry name" value="PNDRDTASEII"/>
</dbReference>
<dbReference type="SUPFAM" id="SSF51905">
    <property type="entry name" value="FAD/NAD(P)-binding domain"/>
    <property type="match status" value="1"/>
</dbReference>
<keyword id="KW-0274">FAD</keyword>
<keyword id="KW-0285">Flavoprotein</keyword>
<keyword id="KW-0521">NADP</keyword>
<keyword id="KW-0560">Oxidoreductase</keyword>
<keyword id="KW-1185">Reference proteome</keyword>
<feature type="chain" id="PRO_0000364872" description="Ferredoxin--NADP reductase 2">
    <location>
        <begin position="1"/>
        <end position="331"/>
    </location>
</feature>
<feature type="binding site" evidence="1">
    <location>
        <position position="37"/>
    </location>
    <ligand>
        <name>FAD</name>
        <dbReference type="ChEBI" id="CHEBI:57692"/>
    </ligand>
</feature>
<feature type="binding site" evidence="1">
    <location>
        <position position="45"/>
    </location>
    <ligand>
        <name>FAD</name>
        <dbReference type="ChEBI" id="CHEBI:57692"/>
    </ligand>
</feature>
<feature type="binding site" evidence="1">
    <location>
        <position position="50"/>
    </location>
    <ligand>
        <name>FAD</name>
        <dbReference type="ChEBI" id="CHEBI:57692"/>
    </ligand>
</feature>
<feature type="binding site" evidence="1">
    <location>
        <position position="90"/>
    </location>
    <ligand>
        <name>FAD</name>
        <dbReference type="ChEBI" id="CHEBI:57692"/>
    </ligand>
</feature>
<feature type="binding site" evidence="1">
    <location>
        <position position="124"/>
    </location>
    <ligand>
        <name>FAD</name>
        <dbReference type="ChEBI" id="CHEBI:57692"/>
    </ligand>
</feature>
<feature type="binding site" evidence="1">
    <location>
        <position position="286"/>
    </location>
    <ligand>
        <name>FAD</name>
        <dbReference type="ChEBI" id="CHEBI:57692"/>
    </ligand>
</feature>
<feature type="binding site" evidence="1">
    <location>
        <position position="327"/>
    </location>
    <ligand>
        <name>FAD</name>
        <dbReference type="ChEBI" id="CHEBI:57692"/>
    </ligand>
</feature>
<name>FENR2_LISMO</name>
<reference key="1">
    <citation type="journal article" date="2001" name="Science">
        <title>Comparative genomics of Listeria species.</title>
        <authorList>
            <person name="Glaser P."/>
            <person name="Frangeul L."/>
            <person name="Buchrieser C."/>
            <person name="Rusniok C."/>
            <person name="Amend A."/>
            <person name="Baquero F."/>
            <person name="Berche P."/>
            <person name="Bloecker H."/>
            <person name="Brandt P."/>
            <person name="Chakraborty T."/>
            <person name="Charbit A."/>
            <person name="Chetouani F."/>
            <person name="Couve E."/>
            <person name="de Daruvar A."/>
            <person name="Dehoux P."/>
            <person name="Domann E."/>
            <person name="Dominguez-Bernal G."/>
            <person name="Duchaud E."/>
            <person name="Durant L."/>
            <person name="Dussurget O."/>
            <person name="Entian K.-D."/>
            <person name="Fsihi H."/>
            <person name="Garcia-del Portillo F."/>
            <person name="Garrido P."/>
            <person name="Gautier L."/>
            <person name="Goebel W."/>
            <person name="Gomez-Lopez N."/>
            <person name="Hain T."/>
            <person name="Hauf J."/>
            <person name="Jackson D."/>
            <person name="Jones L.-M."/>
            <person name="Kaerst U."/>
            <person name="Kreft J."/>
            <person name="Kuhn M."/>
            <person name="Kunst F."/>
            <person name="Kurapkat G."/>
            <person name="Madueno E."/>
            <person name="Maitournam A."/>
            <person name="Mata Vicente J."/>
            <person name="Ng E."/>
            <person name="Nedjari H."/>
            <person name="Nordsiek G."/>
            <person name="Novella S."/>
            <person name="de Pablos B."/>
            <person name="Perez-Diaz J.-C."/>
            <person name="Purcell R."/>
            <person name="Remmel B."/>
            <person name="Rose M."/>
            <person name="Schlueter T."/>
            <person name="Simoes N."/>
            <person name="Tierrez A."/>
            <person name="Vazquez-Boland J.-A."/>
            <person name="Voss H."/>
            <person name="Wehland J."/>
            <person name="Cossart P."/>
        </authorList>
    </citation>
    <scope>NUCLEOTIDE SEQUENCE [LARGE SCALE GENOMIC DNA]</scope>
    <source>
        <strain>ATCC BAA-679 / EGD-e</strain>
    </source>
</reference>
<protein>
    <recommendedName>
        <fullName evidence="1">Ferredoxin--NADP reductase 2</fullName>
        <shortName evidence="1">FNR 2</shortName>
        <shortName evidence="1">Fd-NADP(+) reductase 2</shortName>
        <ecNumber evidence="1">1.18.1.2</ecNumber>
    </recommendedName>
</protein>
<accession>Q8Y4P5</accession>
<sequence length="331" mass="36426">MDEKTKIYDITIIGGGPVGLFAAFYAGMRNASVKIIESLPQLGGQLSTLYPEKYIYDIPGYPSVRAQELVNNLIQQMKPFDPTVALEEAVQSVEKQVDGTFEIITKKDTHYSKAIIITAGNGAFEPRRLDLPEAEQYEGTNIHYFINDLSRFSGRRVAVCGGGDSAVDWALMLEKVASSVAIVHRRNAFRAHEHSVNNLEKSSIAIKTPFIPTEVLGNGDKLTHITLQEVKGDTTETLEIDDFIINYGFVSSLGPIKNWGLELERNSIVVNSKMETSIPGIYCAGDICTYDGKVKLIATGFGEAPTAVNNAMNFIDPKTRVQPMHSTSLFE</sequence>
<evidence type="ECO:0000255" key="1">
    <source>
        <dbReference type="HAMAP-Rule" id="MF_01685"/>
    </source>
</evidence>